<reference key="1">
    <citation type="journal article" date="2000" name="J. Biol. Chem.">
        <title>Biochemical and molecular analyses of the Streptococcus pneumoniae acyl carrier protein synthase, an enzyme essential for fatty acid biosynthesis.</title>
        <authorList>
            <person name="McAllister K.A."/>
            <person name="Peery R.B."/>
            <person name="Meier T.I."/>
            <person name="Fischl A.S."/>
            <person name="Zhao G."/>
        </authorList>
    </citation>
    <scope>NUCLEOTIDE SEQUENCE [GENOMIC DNA]</scope>
    <scope>SUBUNIT</scope>
</reference>
<reference key="2">
    <citation type="journal article" date="2001" name="J. Bacteriol.">
        <title>Genome of the bacterium Streptococcus pneumoniae strain R6.</title>
        <authorList>
            <person name="Hoskins J."/>
            <person name="Alborn W.E. Jr."/>
            <person name="Arnold J."/>
            <person name="Blaszczak L.C."/>
            <person name="Burgett S."/>
            <person name="DeHoff B.S."/>
            <person name="Estrem S.T."/>
            <person name="Fritz L."/>
            <person name="Fu D.-J."/>
            <person name="Fuller W."/>
            <person name="Geringer C."/>
            <person name="Gilmour R."/>
            <person name="Glass J.S."/>
            <person name="Khoja H."/>
            <person name="Kraft A.R."/>
            <person name="Lagace R.E."/>
            <person name="LeBlanc D.J."/>
            <person name="Lee L.N."/>
            <person name="Lefkowitz E.J."/>
            <person name="Lu J."/>
            <person name="Matsushima P."/>
            <person name="McAhren S.M."/>
            <person name="McHenney M."/>
            <person name="McLeaster K."/>
            <person name="Mundy C.W."/>
            <person name="Nicas T.I."/>
            <person name="Norris F.H."/>
            <person name="O'Gara M."/>
            <person name="Peery R.B."/>
            <person name="Robertson G.T."/>
            <person name="Rockey P."/>
            <person name="Sun P.-M."/>
            <person name="Winkler M.E."/>
            <person name="Yang Y."/>
            <person name="Young-Bellido M."/>
            <person name="Zhao G."/>
            <person name="Zook C.A."/>
            <person name="Baltz R.H."/>
            <person name="Jaskunas S.R."/>
            <person name="Rosteck P.R. Jr."/>
            <person name="Skatrud P.L."/>
            <person name="Glass J.I."/>
        </authorList>
    </citation>
    <scope>NUCLEOTIDE SEQUENCE [LARGE SCALE GENOMIC DNA]</scope>
    <source>
        <strain>ATCC BAA-255 / R6</strain>
    </source>
</reference>
<feature type="chain" id="PRO_0000175714" description="Holo-[acyl-carrier-protein] synthase">
    <location>
        <begin position="1"/>
        <end position="120"/>
    </location>
</feature>
<feature type="binding site" evidence="1">
    <location>
        <position position="8"/>
    </location>
    <ligand>
        <name>Mg(2+)</name>
        <dbReference type="ChEBI" id="CHEBI:18420"/>
    </ligand>
</feature>
<feature type="binding site" evidence="1">
    <location>
        <position position="58"/>
    </location>
    <ligand>
        <name>Mg(2+)</name>
        <dbReference type="ChEBI" id="CHEBI:18420"/>
    </ligand>
</feature>
<dbReference type="EC" id="2.7.8.7" evidence="1"/>
<dbReference type="EMBL" id="AF276617">
    <property type="protein sequence ID" value="AAG22706.1"/>
    <property type="molecule type" value="Genomic_DNA"/>
</dbReference>
<dbReference type="EMBL" id="AE007317">
    <property type="protein sequence ID" value="AAL00345.1"/>
    <property type="molecule type" value="Genomic_DNA"/>
</dbReference>
<dbReference type="PIR" id="D98064">
    <property type="entry name" value="D98064"/>
</dbReference>
<dbReference type="RefSeq" id="NP_359134.1">
    <property type="nucleotide sequence ID" value="NC_003098.1"/>
</dbReference>
<dbReference type="RefSeq" id="WP_000635008.1">
    <property type="nucleotide sequence ID" value="NC_003098.1"/>
</dbReference>
<dbReference type="SMR" id="P0A2W7"/>
<dbReference type="STRING" id="171101.spr1541"/>
<dbReference type="DrugBank" id="DB01812">
    <property type="generic name" value="Adenosine 3',5'-diphosphate"/>
</dbReference>
<dbReference type="KEGG" id="spr:spr1541"/>
<dbReference type="PATRIC" id="fig|171101.6.peg.1664"/>
<dbReference type="eggNOG" id="COG0736">
    <property type="taxonomic scope" value="Bacteria"/>
</dbReference>
<dbReference type="HOGENOM" id="CLU_089696_1_2_9"/>
<dbReference type="BRENDA" id="2.7.8.7">
    <property type="organism ID" value="6077"/>
</dbReference>
<dbReference type="Proteomes" id="UP000000586">
    <property type="component" value="Chromosome"/>
</dbReference>
<dbReference type="GO" id="GO:0005829">
    <property type="term" value="C:cytosol"/>
    <property type="evidence" value="ECO:0000318"/>
    <property type="project" value="GO_Central"/>
</dbReference>
<dbReference type="GO" id="GO:0008897">
    <property type="term" value="F:holo-[acyl-carrier-protein] synthase activity"/>
    <property type="evidence" value="ECO:0000318"/>
    <property type="project" value="GO_Central"/>
</dbReference>
<dbReference type="GO" id="GO:0000287">
    <property type="term" value="F:magnesium ion binding"/>
    <property type="evidence" value="ECO:0007669"/>
    <property type="project" value="UniProtKB-UniRule"/>
</dbReference>
<dbReference type="GO" id="GO:0006633">
    <property type="term" value="P:fatty acid biosynthetic process"/>
    <property type="evidence" value="ECO:0007669"/>
    <property type="project" value="UniProtKB-UniRule"/>
</dbReference>
<dbReference type="GO" id="GO:0019878">
    <property type="term" value="P:lysine biosynthetic process via aminoadipic acid"/>
    <property type="evidence" value="ECO:0000318"/>
    <property type="project" value="GO_Central"/>
</dbReference>
<dbReference type="Gene3D" id="3.90.470.20">
    <property type="entry name" value="4'-phosphopantetheinyl transferase domain"/>
    <property type="match status" value="1"/>
</dbReference>
<dbReference type="HAMAP" id="MF_00101">
    <property type="entry name" value="AcpS"/>
    <property type="match status" value="1"/>
</dbReference>
<dbReference type="InterPro" id="IPR008278">
    <property type="entry name" value="4-PPantetheinyl_Trfase_dom"/>
</dbReference>
<dbReference type="InterPro" id="IPR037143">
    <property type="entry name" value="4-PPantetheinyl_Trfase_dom_sf"/>
</dbReference>
<dbReference type="InterPro" id="IPR002582">
    <property type="entry name" value="ACPS"/>
</dbReference>
<dbReference type="InterPro" id="IPR050559">
    <property type="entry name" value="P-Pant_transferase_sf"/>
</dbReference>
<dbReference type="InterPro" id="IPR004568">
    <property type="entry name" value="Ppantetheine-prot_Trfase_dom"/>
</dbReference>
<dbReference type="NCBIfam" id="TIGR00516">
    <property type="entry name" value="acpS"/>
    <property type="match status" value="1"/>
</dbReference>
<dbReference type="NCBIfam" id="TIGR00556">
    <property type="entry name" value="pantethn_trn"/>
    <property type="match status" value="1"/>
</dbReference>
<dbReference type="PANTHER" id="PTHR12215:SF10">
    <property type="entry name" value="L-AMINOADIPATE-SEMIALDEHYDE DEHYDROGENASE-PHOSPHOPANTETHEINYL TRANSFERASE"/>
    <property type="match status" value="1"/>
</dbReference>
<dbReference type="PANTHER" id="PTHR12215">
    <property type="entry name" value="PHOSPHOPANTETHEINE TRANSFERASE"/>
    <property type="match status" value="1"/>
</dbReference>
<dbReference type="Pfam" id="PF01648">
    <property type="entry name" value="ACPS"/>
    <property type="match status" value="1"/>
</dbReference>
<dbReference type="SUPFAM" id="SSF56214">
    <property type="entry name" value="4'-phosphopantetheinyl transferase"/>
    <property type="match status" value="1"/>
</dbReference>
<sequence length="120" mass="13388">MIVGHGIDIEELASIESAVTRHEGFAKRVLTAQEMERFTSLKGRRQIEYLAGRWSAKEAFSKAMGTGISKLGFQDLEVLNNERGAPYFSQAPFSGKIWLSISHTDQFVTASVILEENHES</sequence>
<name>ACPS_STRR6</name>
<organism>
    <name type="scientific">Streptococcus pneumoniae (strain ATCC BAA-255 / R6)</name>
    <dbReference type="NCBI Taxonomy" id="171101"/>
    <lineage>
        <taxon>Bacteria</taxon>
        <taxon>Bacillati</taxon>
        <taxon>Bacillota</taxon>
        <taxon>Bacilli</taxon>
        <taxon>Lactobacillales</taxon>
        <taxon>Streptococcaceae</taxon>
        <taxon>Streptococcus</taxon>
    </lineage>
</organism>
<accession>P0A2W7</accession>
<accession>Q9F7T5</accession>
<gene>
    <name evidence="1" type="primary">acpS</name>
    <name type="ordered locus">spr1541</name>
</gene>
<proteinExistence type="evidence at protein level"/>
<protein>
    <recommendedName>
        <fullName evidence="1">Holo-[acyl-carrier-protein] synthase</fullName>
        <shortName evidence="1">Holo-ACP synthase</shortName>
        <ecNumber evidence="1">2.7.8.7</ecNumber>
    </recommendedName>
    <alternativeName>
        <fullName evidence="1">4'-phosphopantetheinyl transferase AcpS</fullName>
    </alternativeName>
</protein>
<keyword id="KW-0963">Cytoplasm</keyword>
<keyword id="KW-0275">Fatty acid biosynthesis</keyword>
<keyword id="KW-0276">Fatty acid metabolism</keyword>
<keyword id="KW-0444">Lipid biosynthesis</keyword>
<keyword id="KW-0443">Lipid metabolism</keyword>
<keyword id="KW-0460">Magnesium</keyword>
<keyword id="KW-0479">Metal-binding</keyword>
<keyword id="KW-1185">Reference proteome</keyword>
<keyword id="KW-0808">Transferase</keyword>
<comment type="function">
    <text evidence="1">Transfers the 4'-phosphopantetheine moiety from coenzyme A to a Ser of acyl-carrier-protein.</text>
</comment>
<comment type="catalytic activity">
    <reaction evidence="1">
        <text>apo-[ACP] + CoA = holo-[ACP] + adenosine 3',5'-bisphosphate + H(+)</text>
        <dbReference type="Rhea" id="RHEA:12068"/>
        <dbReference type="Rhea" id="RHEA-COMP:9685"/>
        <dbReference type="Rhea" id="RHEA-COMP:9690"/>
        <dbReference type="ChEBI" id="CHEBI:15378"/>
        <dbReference type="ChEBI" id="CHEBI:29999"/>
        <dbReference type="ChEBI" id="CHEBI:57287"/>
        <dbReference type="ChEBI" id="CHEBI:58343"/>
        <dbReference type="ChEBI" id="CHEBI:64479"/>
        <dbReference type="EC" id="2.7.8.7"/>
    </reaction>
</comment>
<comment type="cofactor">
    <cofactor evidence="1">
        <name>Mg(2+)</name>
        <dbReference type="ChEBI" id="CHEBI:18420"/>
    </cofactor>
</comment>
<comment type="subunit">
    <text evidence="2">Homotrimer.</text>
</comment>
<comment type="subcellular location">
    <subcellularLocation>
        <location evidence="1">Cytoplasm</location>
    </subcellularLocation>
</comment>
<comment type="similarity">
    <text evidence="1">Belongs to the P-Pant transferase superfamily. AcpS family.</text>
</comment>
<evidence type="ECO:0000255" key="1">
    <source>
        <dbReference type="HAMAP-Rule" id="MF_00101"/>
    </source>
</evidence>
<evidence type="ECO:0000269" key="2">
    <source>
    </source>
</evidence>